<dbReference type="EMBL" id="Z73171">
    <property type="status" value="NOT_ANNOTATED_CDS"/>
    <property type="molecule type" value="Genomic_DNA"/>
</dbReference>
<dbReference type="EMBL" id="Z47973">
    <property type="status" value="NOT_ANNOTATED_CDS"/>
    <property type="molecule type" value="Genomic_DNA"/>
</dbReference>
<dbReference type="EMBL" id="AF480007">
    <property type="protein sequence ID" value="AAL79320.1"/>
    <property type="molecule type" value="Genomic_DNA"/>
</dbReference>
<dbReference type="EMBL" id="BK006945">
    <property type="status" value="NOT_ANNOTATED_CDS"/>
    <property type="molecule type" value="Genomic_DNA"/>
</dbReference>
<dbReference type="PIR" id="S56187">
    <property type="entry name" value="S56187"/>
</dbReference>
<dbReference type="RefSeq" id="NP_116587.1">
    <property type="nucleotide sequence ID" value="NM_001179899.1"/>
</dbReference>
<dbReference type="BioGRID" id="31080">
    <property type="interactions" value="4"/>
</dbReference>
<dbReference type="FunCoup" id="P0CY00">
    <property type="interactions" value="54"/>
</dbReference>
<dbReference type="EnsemblFungi" id="YFL068W_mRNA">
    <property type="protein sequence ID" value="YFL068W"/>
    <property type="gene ID" value="YFL068W"/>
</dbReference>
<dbReference type="EnsemblFungi" id="YLL066W-A_mRNA">
    <property type="protein sequence ID" value="YLL066W-A"/>
    <property type="gene ID" value="YLL066W-A"/>
</dbReference>
<dbReference type="EnsemblFungi" id="YLL067W-A_mRNA">
    <property type="protein sequence ID" value="YLL067W-A"/>
    <property type="gene ID" value="YLL067W-A"/>
</dbReference>
<dbReference type="KEGG" id="sce:YFL068W"/>
<dbReference type="AGR" id="SGD:S000028671"/>
<dbReference type="SGD" id="S000028671">
    <property type="gene designation" value="YLL066W-A"/>
</dbReference>
<dbReference type="VEuPathDB" id="FungiDB:YFL068W"/>
<dbReference type="HOGENOM" id="CLU_139933_0_0_1"/>
<dbReference type="InParanoid" id="P0CY00"/>
<dbReference type="PRO" id="PR:P0CY00"/>
<dbReference type="Proteomes" id="UP000002311">
    <property type="component" value="Chromosome XII"/>
</dbReference>
<dbReference type="RNAct" id="P0CY00">
    <property type="molecule type" value="protein"/>
</dbReference>
<dbReference type="ExpressionAtlas" id="P0CY00">
    <property type="expression patterns" value="baseline"/>
</dbReference>
<dbReference type="GO" id="GO:0016020">
    <property type="term" value="C:membrane"/>
    <property type="evidence" value="ECO:0007669"/>
    <property type="project" value="UniProtKB-SubCell"/>
</dbReference>
<reference key="1">
    <citation type="journal article" date="1997" name="Nature">
        <title>The nucleotide sequence of Saccharomyces cerevisiae chromosome XII.</title>
        <authorList>
            <person name="Johnston M."/>
            <person name="Hillier L.W."/>
            <person name="Riles L."/>
            <person name="Albermann K."/>
            <person name="Andre B."/>
            <person name="Ansorge W."/>
            <person name="Benes V."/>
            <person name="Brueckner M."/>
            <person name="Delius H."/>
            <person name="Dubois E."/>
            <person name="Duesterhoeft A."/>
            <person name="Entian K.-D."/>
            <person name="Floeth M."/>
            <person name="Goffeau A."/>
            <person name="Hebling U."/>
            <person name="Heumann K."/>
            <person name="Heuss-Neitzel D."/>
            <person name="Hilbert H."/>
            <person name="Hilger F."/>
            <person name="Kleine K."/>
            <person name="Koetter P."/>
            <person name="Louis E.J."/>
            <person name="Messenguy F."/>
            <person name="Mewes H.-W."/>
            <person name="Miosga T."/>
            <person name="Moestl D."/>
            <person name="Mueller-Auer S."/>
            <person name="Nentwich U."/>
            <person name="Obermaier B."/>
            <person name="Piravandi E."/>
            <person name="Pohl T.M."/>
            <person name="Portetelle D."/>
            <person name="Purnelle B."/>
            <person name="Rechmann S."/>
            <person name="Rieger M."/>
            <person name="Rinke M."/>
            <person name="Rose M."/>
            <person name="Scharfe M."/>
            <person name="Scherens B."/>
            <person name="Scholler P."/>
            <person name="Schwager C."/>
            <person name="Schwarz S."/>
            <person name="Underwood A.P."/>
            <person name="Urrestarazu L.A."/>
            <person name="Vandenbol M."/>
            <person name="Verhasselt P."/>
            <person name="Vierendeels F."/>
            <person name="Voet M."/>
            <person name="Volckaert G."/>
            <person name="Voss H."/>
            <person name="Wambutt R."/>
            <person name="Wedler E."/>
            <person name="Wedler H."/>
            <person name="Zimmermann F.K."/>
            <person name="Zollner A."/>
            <person name="Hani J."/>
            <person name="Hoheisel J.D."/>
        </authorList>
    </citation>
    <scope>NUCLEOTIDE SEQUENCE [LARGE SCALE GENOMIC DNA]</scope>
    <source>
        <strain>ATCC 204508 / S288c</strain>
    </source>
</reference>
<reference key="2">
    <citation type="journal article" date="2014" name="G3 (Bethesda)">
        <title>The reference genome sequence of Saccharomyces cerevisiae: Then and now.</title>
        <authorList>
            <person name="Engel S.R."/>
            <person name="Dietrich F.S."/>
            <person name="Fisk D.G."/>
            <person name="Binkley G."/>
            <person name="Balakrishnan R."/>
            <person name="Costanzo M.C."/>
            <person name="Dwight S.S."/>
            <person name="Hitz B.C."/>
            <person name="Karra K."/>
            <person name="Nash R.S."/>
            <person name="Weng S."/>
            <person name="Wong E.D."/>
            <person name="Lloyd P."/>
            <person name="Skrzypek M.S."/>
            <person name="Miyasato S.R."/>
            <person name="Simison M."/>
            <person name="Cherry J.M."/>
        </authorList>
    </citation>
    <scope>GENOME REANNOTATION</scope>
    <source>
        <strain>ATCC 204508 / S288c</strain>
    </source>
</reference>
<reference key="3">
    <citation type="journal article" date="2002" name="Nat. Biotechnol.">
        <title>An integrated approach for finding overlooked genes in yeast.</title>
        <authorList>
            <person name="Kumar A."/>
            <person name="Harrison P.M."/>
            <person name="Cheung K.-H."/>
            <person name="Lan N."/>
            <person name="Echols N."/>
            <person name="Bertone P."/>
            <person name="Miller P."/>
            <person name="Gerstein M.B."/>
            <person name="Snyder M."/>
        </authorList>
    </citation>
    <scope>NUCLEOTIDE SEQUENCE [GENOMIC DNA]</scope>
</reference>
<sequence length="160" mass="18593">MMPAKLQLDVLRTLQSSARHGTQTLKNSNFLERFHKDRIVFCLPFFPALFLVPVQKVLQHLCLRFTQVAPYFIIQLFDLPSRHAENLAPLLASCRIQYTNCFSSSSNGQVPSIISLYLRVDLSPFYAKKFQIPYRVPMIWLDVFQVFFVFLVISQHSLHS</sequence>
<protein>
    <recommendedName>
        <fullName>UPF0479 membrane protein YLL066W-A</fullName>
    </recommendedName>
</protein>
<keyword id="KW-0472">Membrane</keyword>
<keyword id="KW-1185">Reference proteome</keyword>
<keyword id="KW-0812">Transmembrane</keyword>
<keyword id="KW-1133">Transmembrane helix</keyword>
<feature type="chain" id="PRO_0000410456" description="UPF0479 membrane protein YLL066W-A">
    <location>
        <begin position="1"/>
        <end position="160"/>
    </location>
</feature>
<feature type="transmembrane region" description="Helical" evidence="1">
    <location>
        <begin position="39"/>
        <end position="59"/>
    </location>
</feature>
<feature type="transmembrane region" description="Helical" evidence="1">
    <location>
        <begin position="136"/>
        <end position="156"/>
    </location>
</feature>
<gene>
    <name type="ordered locus">YLL066W-A</name>
</gene>
<comment type="subcellular location">
    <subcellularLocation>
        <location evidence="2">Membrane</location>
        <topology evidence="2">Multi-pass membrane protein</topology>
    </subcellularLocation>
</comment>
<comment type="similarity">
    <text evidence="2">Belongs to the UPF0479 family.</text>
</comment>
<organism>
    <name type="scientific">Saccharomyces cerevisiae (strain ATCC 204508 / S288c)</name>
    <name type="common">Baker's yeast</name>
    <dbReference type="NCBI Taxonomy" id="559292"/>
    <lineage>
        <taxon>Eukaryota</taxon>
        <taxon>Fungi</taxon>
        <taxon>Dikarya</taxon>
        <taxon>Ascomycota</taxon>
        <taxon>Saccharomycotina</taxon>
        <taxon>Saccharomycetes</taxon>
        <taxon>Saccharomycetales</taxon>
        <taxon>Saccharomycetaceae</taxon>
        <taxon>Saccharomyces</taxon>
    </lineage>
</organism>
<accession>P0CY00</accession>
<accession>D6VTG3</accession>
<accession>P43536</accession>
<accession>Q547K4</accession>
<accession>Q8TGK2</accession>
<name>YL66A_YEAST</name>
<evidence type="ECO:0000255" key="1"/>
<evidence type="ECO:0000305" key="2"/>
<proteinExistence type="inferred from homology"/>